<feature type="chain" id="PRO_0000352297" description="5-dehydro-2-deoxygluconokinase">
    <location>
        <begin position="1"/>
        <end position="338"/>
    </location>
</feature>
<sequence>MRYIEFDEKRKFDIVPVGRVAIDFNPTDIHKPLSESRNFNKYLGGSPANIAVGLARLGKKVGFIGKVSDDRFGEFVVNYFKKEGIDVSEISKAKNGESLGLTFTEILSPTESSILMYRNGIADLQLDVDDIDEDYIKNTKAIVISGTALAMSPSREAALKALRLAKKNGTVVIFDVDYREYNWKNKDEIAIYYSIVGKESDIIMGSREEFDLMEGLIAKDSTDEETAKRWLDYGNKIVVIKHGKDGSTAYTRDGKAYRIKPFPVKLLKSFGGGDAYASAFIYGILEGWDMMDALEFGSASAAMLVASHSCSEDMPTVEAIKEFIKKEKEEYGEMVARS</sequence>
<name>IOLC_CLOP1</name>
<dbReference type="EC" id="2.7.1.92" evidence="1"/>
<dbReference type="EMBL" id="CP000246">
    <property type="protein sequence ID" value="ABG83660.1"/>
    <property type="molecule type" value="Genomic_DNA"/>
</dbReference>
<dbReference type="RefSeq" id="WP_003448561.1">
    <property type="nucleotide sequence ID" value="NC_008261.1"/>
</dbReference>
<dbReference type="SMR" id="Q0TUZ4"/>
<dbReference type="STRING" id="195103.CPF_0082"/>
<dbReference type="PaxDb" id="195103-CPF_0082"/>
<dbReference type="GeneID" id="93000607"/>
<dbReference type="KEGG" id="cpf:CPF_0082"/>
<dbReference type="eggNOG" id="COG0524">
    <property type="taxonomic scope" value="Bacteria"/>
</dbReference>
<dbReference type="HOGENOM" id="CLU_027634_6_0_9"/>
<dbReference type="UniPathway" id="UPA00076">
    <property type="reaction ID" value="UER00146"/>
</dbReference>
<dbReference type="Proteomes" id="UP000001823">
    <property type="component" value="Chromosome"/>
</dbReference>
<dbReference type="GO" id="GO:0047590">
    <property type="term" value="F:5-dehydro-2-deoxygluconokinase activity"/>
    <property type="evidence" value="ECO:0007669"/>
    <property type="project" value="UniProtKB-UniRule"/>
</dbReference>
<dbReference type="GO" id="GO:0005524">
    <property type="term" value="F:ATP binding"/>
    <property type="evidence" value="ECO:0007669"/>
    <property type="project" value="UniProtKB-UniRule"/>
</dbReference>
<dbReference type="GO" id="GO:0019310">
    <property type="term" value="P:inositol catabolic process"/>
    <property type="evidence" value="ECO:0007669"/>
    <property type="project" value="UniProtKB-UniRule"/>
</dbReference>
<dbReference type="CDD" id="cd01166">
    <property type="entry name" value="KdgK"/>
    <property type="match status" value="1"/>
</dbReference>
<dbReference type="Gene3D" id="3.40.1190.20">
    <property type="match status" value="1"/>
</dbReference>
<dbReference type="Gene3D" id="2.20.150.10">
    <property type="entry name" value="putative 5-dehydro-2- deoxygluconokinase"/>
    <property type="match status" value="1"/>
</dbReference>
<dbReference type="HAMAP" id="MF_01668">
    <property type="entry name" value="IolC"/>
    <property type="match status" value="1"/>
</dbReference>
<dbReference type="InterPro" id="IPR002173">
    <property type="entry name" value="Carboh/pur_kinase_PfkB_CS"/>
</dbReference>
<dbReference type="InterPro" id="IPR022841">
    <property type="entry name" value="DKG_kinase_firmi"/>
</dbReference>
<dbReference type="InterPro" id="IPR030830">
    <property type="entry name" value="Myo_inos_IolC"/>
</dbReference>
<dbReference type="InterPro" id="IPR023314">
    <property type="entry name" value="Myo_inos_IolC-like_sf"/>
</dbReference>
<dbReference type="InterPro" id="IPR050306">
    <property type="entry name" value="PfkB_Carbo_kinase"/>
</dbReference>
<dbReference type="InterPro" id="IPR011611">
    <property type="entry name" value="PfkB_dom"/>
</dbReference>
<dbReference type="InterPro" id="IPR029056">
    <property type="entry name" value="Ribokinase-like"/>
</dbReference>
<dbReference type="NCBIfam" id="TIGR04382">
    <property type="entry name" value="myo_inos_iolC_N"/>
    <property type="match status" value="1"/>
</dbReference>
<dbReference type="PANTHER" id="PTHR43085:SF49">
    <property type="entry name" value="5-DEHYDRO-2-DEOXYGLUCONOKINASE"/>
    <property type="match status" value="1"/>
</dbReference>
<dbReference type="PANTHER" id="PTHR43085">
    <property type="entry name" value="HEXOKINASE FAMILY MEMBER"/>
    <property type="match status" value="1"/>
</dbReference>
<dbReference type="Pfam" id="PF00294">
    <property type="entry name" value="PfkB"/>
    <property type="match status" value="1"/>
</dbReference>
<dbReference type="SUPFAM" id="SSF53613">
    <property type="entry name" value="Ribokinase-like"/>
    <property type="match status" value="1"/>
</dbReference>
<dbReference type="PROSITE" id="PS00584">
    <property type="entry name" value="PFKB_KINASES_2"/>
    <property type="match status" value="1"/>
</dbReference>
<proteinExistence type="inferred from homology"/>
<gene>
    <name evidence="1" type="primary">iolC</name>
    <name type="ordered locus">CPF_0082</name>
</gene>
<reference key="1">
    <citation type="journal article" date="2006" name="Genome Res.">
        <title>Skewed genomic variability in strains of the toxigenic bacterial pathogen, Clostridium perfringens.</title>
        <authorList>
            <person name="Myers G.S.A."/>
            <person name="Rasko D.A."/>
            <person name="Cheung J.K."/>
            <person name="Ravel J."/>
            <person name="Seshadri R."/>
            <person name="DeBoy R.T."/>
            <person name="Ren Q."/>
            <person name="Varga J."/>
            <person name="Awad M.M."/>
            <person name="Brinkac L.M."/>
            <person name="Daugherty S.C."/>
            <person name="Haft D.H."/>
            <person name="Dodson R.J."/>
            <person name="Madupu R."/>
            <person name="Nelson W.C."/>
            <person name="Rosovitz M.J."/>
            <person name="Sullivan S.A."/>
            <person name="Khouri H."/>
            <person name="Dimitrov G.I."/>
            <person name="Watkins K.L."/>
            <person name="Mulligan S."/>
            <person name="Benton J."/>
            <person name="Radune D."/>
            <person name="Fisher D.J."/>
            <person name="Atkins H.S."/>
            <person name="Hiscox T."/>
            <person name="Jost B.H."/>
            <person name="Billington S.J."/>
            <person name="Songer J.G."/>
            <person name="McClane B.A."/>
            <person name="Titball R.W."/>
            <person name="Rood J.I."/>
            <person name="Melville S.B."/>
            <person name="Paulsen I.T."/>
        </authorList>
    </citation>
    <scope>NUCLEOTIDE SEQUENCE [LARGE SCALE GENOMIC DNA]</scope>
    <source>
        <strain>ATCC 13124 / DSM 756 / JCM 1290 / NCIMB 6125 / NCTC 8237 / S 107 / Type A</strain>
    </source>
</reference>
<comment type="function">
    <text evidence="1">Catalyzes the phosphorylation of 5-dehydro-2-deoxy-D-gluconate (2-deoxy-5-keto-D-gluconate or DKG) to 6-phospho-5-dehydro-2-deoxy-D-gluconate (DKGP).</text>
</comment>
<comment type="catalytic activity">
    <reaction evidence="1">
        <text>5-dehydro-2-deoxy-D-gluconate + ATP = 6-phospho-5-dehydro-2-deoxy-D-gluconate + ADP + H(+)</text>
        <dbReference type="Rhea" id="RHEA:13497"/>
        <dbReference type="ChEBI" id="CHEBI:15378"/>
        <dbReference type="ChEBI" id="CHEBI:16669"/>
        <dbReference type="ChEBI" id="CHEBI:30616"/>
        <dbReference type="ChEBI" id="CHEBI:57949"/>
        <dbReference type="ChEBI" id="CHEBI:456216"/>
        <dbReference type="EC" id="2.7.1.92"/>
    </reaction>
</comment>
<comment type="pathway">
    <text evidence="1">Polyol metabolism; myo-inositol degradation into acetyl-CoA; acetyl-CoA from myo-inositol: step 5/7.</text>
</comment>
<comment type="similarity">
    <text evidence="1">Belongs to the carbohydrate kinase PfkB family.</text>
</comment>
<evidence type="ECO:0000255" key="1">
    <source>
        <dbReference type="HAMAP-Rule" id="MF_01668"/>
    </source>
</evidence>
<keyword id="KW-0067">ATP-binding</keyword>
<keyword id="KW-0418">Kinase</keyword>
<keyword id="KW-0547">Nucleotide-binding</keyword>
<keyword id="KW-0808">Transferase</keyword>
<accession>Q0TUZ4</accession>
<protein>
    <recommendedName>
        <fullName evidence="1">5-dehydro-2-deoxygluconokinase</fullName>
        <ecNumber evidence="1">2.7.1.92</ecNumber>
    </recommendedName>
    <alternativeName>
        <fullName evidence="1">2-deoxy-5-keto-D-gluconate kinase</fullName>
        <shortName evidence="1">DKG kinase</shortName>
    </alternativeName>
</protein>
<organism>
    <name type="scientific">Clostridium perfringens (strain ATCC 13124 / DSM 756 / JCM 1290 / NCIMB 6125 / NCTC 8237 / Type A)</name>
    <dbReference type="NCBI Taxonomy" id="195103"/>
    <lineage>
        <taxon>Bacteria</taxon>
        <taxon>Bacillati</taxon>
        <taxon>Bacillota</taxon>
        <taxon>Clostridia</taxon>
        <taxon>Eubacteriales</taxon>
        <taxon>Clostridiaceae</taxon>
        <taxon>Clostridium</taxon>
    </lineage>
</organism>